<proteinExistence type="inferred from homology"/>
<organism>
    <name type="scientific">Thermococcus kodakarensis (strain ATCC BAA-918 / JCM 12380 / KOD1)</name>
    <name type="common">Pyrococcus kodakaraensis (strain KOD1)</name>
    <dbReference type="NCBI Taxonomy" id="69014"/>
    <lineage>
        <taxon>Archaea</taxon>
        <taxon>Methanobacteriati</taxon>
        <taxon>Methanobacteriota</taxon>
        <taxon>Thermococci</taxon>
        <taxon>Thermococcales</taxon>
        <taxon>Thermococcaceae</taxon>
        <taxon>Thermococcus</taxon>
    </lineage>
</organism>
<reference key="1">
    <citation type="journal article" date="2005" name="Genome Res.">
        <title>Complete genome sequence of the hyperthermophilic archaeon Thermococcus kodakaraensis KOD1 and comparison with Pyrococcus genomes.</title>
        <authorList>
            <person name="Fukui T."/>
            <person name="Atomi H."/>
            <person name="Kanai T."/>
            <person name="Matsumi R."/>
            <person name="Fujiwara S."/>
            <person name="Imanaka T."/>
        </authorList>
    </citation>
    <scope>NUCLEOTIDE SEQUENCE [LARGE SCALE GENOMIC DNA]</scope>
    <source>
        <strain>ATCC BAA-918 / JCM 12380 / KOD1</strain>
    </source>
</reference>
<keyword id="KW-0068">Autocatalytic cleavage</keyword>
<keyword id="KW-0210">Decarboxylase</keyword>
<keyword id="KW-0456">Lyase</keyword>
<keyword id="KW-0620">Polyamine biosynthesis</keyword>
<keyword id="KW-0670">Pyruvate</keyword>
<keyword id="KW-1185">Reference proteome</keyword>
<keyword id="KW-0949">S-adenosyl-L-methionine</keyword>
<keyword id="KW-0704">Schiff base</keyword>
<keyword id="KW-0745">Spermidine biosynthesis</keyword>
<keyword id="KW-0865">Zymogen</keyword>
<gene>
    <name evidence="1" type="primary">speH</name>
    <name type="ordered locus">TK1592</name>
</gene>
<name>SPEH_THEKO</name>
<accession>Q5JDS7</accession>
<protein>
    <recommendedName>
        <fullName evidence="1">S-adenosylmethionine decarboxylase proenzyme</fullName>
        <shortName evidence="1">AdoMetDC</shortName>
        <shortName evidence="1">SAMDC</shortName>
        <ecNumber evidence="1">4.1.1.50</ecNumber>
    </recommendedName>
    <component>
        <recommendedName>
            <fullName evidence="1">S-adenosylmethionine decarboxylase beta chain</fullName>
        </recommendedName>
    </component>
    <component>
        <recommendedName>
            <fullName evidence="1">S-adenosylmethionine decarboxylase alpha chain</fullName>
        </recommendedName>
    </component>
</protein>
<evidence type="ECO:0000255" key="1">
    <source>
        <dbReference type="HAMAP-Rule" id="MF_00464"/>
    </source>
</evidence>
<feature type="chain" id="PRO_0000030147" description="S-adenosylmethionine decarboxylase beta chain" evidence="1">
    <location>
        <begin position="1"/>
        <end position="65"/>
    </location>
</feature>
<feature type="chain" id="PRO_0000030148" description="S-adenosylmethionine decarboxylase alpha chain" evidence="1">
    <location>
        <begin position="66"/>
        <end position="143"/>
    </location>
</feature>
<feature type="active site" description="Schiff-base intermediate with substrate; via pyruvic acid" evidence="1">
    <location>
        <position position="66"/>
    </location>
</feature>
<feature type="active site" description="Proton acceptor; for processing activity" evidence="1">
    <location>
        <position position="71"/>
    </location>
</feature>
<feature type="active site" description="Proton donor; for catalytic activity" evidence="1">
    <location>
        <position position="86"/>
    </location>
</feature>
<feature type="site" description="Cleavage (non-hydrolytic); by autolysis" evidence="1">
    <location>
        <begin position="65"/>
        <end position="66"/>
    </location>
</feature>
<feature type="modified residue" description="Pyruvic acid (Ser); by autocatalysis" evidence="1">
    <location>
        <position position="66"/>
    </location>
</feature>
<comment type="function">
    <text evidence="1">Catalyzes the decarboxylation of S-adenosylmethionine to S-adenosylmethioninamine (dcAdoMet), the propylamine donor required for the synthesis of the polyamines spermine and spermidine from the diamine putrescine.</text>
</comment>
<comment type="catalytic activity">
    <reaction evidence="1">
        <text>S-adenosyl-L-methionine + H(+) = S-adenosyl 3-(methylsulfanyl)propylamine + CO2</text>
        <dbReference type="Rhea" id="RHEA:15981"/>
        <dbReference type="ChEBI" id="CHEBI:15378"/>
        <dbReference type="ChEBI" id="CHEBI:16526"/>
        <dbReference type="ChEBI" id="CHEBI:57443"/>
        <dbReference type="ChEBI" id="CHEBI:59789"/>
        <dbReference type="EC" id="4.1.1.50"/>
    </reaction>
</comment>
<comment type="cofactor">
    <cofactor evidence="1">
        <name>pyruvate</name>
        <dbReference type="ChEBI" id="CHEBI:15361"/>
    </cofactor>
    <text evidence="1">Binds 1 pyruvoyl group covalently per subunit.</text>
</comment>
<comment type="pathway">
    <text evidence="1">Amine and polyamine biosynthesis; S-adenosylmethioninamine biosynthesis; S-adenosylmethioninamine from S-adenosyl-L-methionine: step 1/1.</text>
</comment>
<comment type="subunit">
    <text evidence="1">Heterotetramer of two alpha and two beta chains arranged as a dimer of alpha/beta heterodimers.</text>
</comment>
<comment type="PTM">
    <text evidence="1">Is synthesized initially as an inactive proenzyme. Formation of the active enzyme involves a self-maturation process in which the active site pyruvoyl group is generated from an internal serine residue via an autocatalytic post-translational modification. Two non-identical subunits are generated from the proenzyme in this reaction, and the pyruvate is formed at the N-terminus of the alpha chain, which is derived from the carboxyl end of the proenzyme. The post-translation cleavage follows an unusual pathway, termed non-hydrolytic serinolysis, in which the side chain hydroxyl group of the serine supplies its oxygen atom to form the C-terminus of the beta chain, while the remainder of the serine residue undergoes an oxidative deamination to produce ammonia and the pyruvoyl group blocking the N-terminus of the alpha chain.</text>
</comment>
<comment type="similarity">
    <text evidence="1">Belongs to the prokaryotic AdoMetDC family. Type 1 subfamily.</text>
</comment>
<sequence>MTEIETIGFHYVVEAAGCDPEVLGNADRIRQIFLEAAKVGNMEVKASYFFKFSPTGVSGVVIVAESHISVHTWPEKGYAALDVYTCGTKANPEKAVDYILEQFKAKYAHVSEIKRGIEEDDETFTHMIMTWEEALRKNGNGSG</sequence>
<dbReference type="EC" id="4.1.1.50" evidence="1"/>
<dbReference type="EMBL" id="AP006878">
    <property type="protein sequence ID" value="BAD85781.1"/>
    <property type="molecule type" value="Genomic_DNA"/>
</dbReference>
<dbReference type="SMR" id="Q5JDS7"/>
<dbReference type="FunCoup" id="Q5JDS7">
    <property type="interactions" value="13"/>
</dbReference>
<dbReference type="STRING" id="69014.TK1592"/>
<dbReference type="EnsemblBacteria" id="BAD85781">
    <property type="protein sequence ID" value="BAD85781"/>
    <property type="gene ID" value="TK1592"/>
</dbReference>
<dbReference type="KEGG" id="tko:TK1592"/>
<dbReference type="PATRIC" id="fig|69014.16.peg.1551"/>
<dbReference type="eggNOG" id="arCOG00279">
    <property type="taxonomic scope" value="Archaea"/>
</dbReference>
<dbReference type="HOGENOM" id="CLU_125470_2_2_2"/>
<dbReference type="InParanoid" id="Q5JDS7"/>
<dbReference type="PhylomeDB" id="Q5JDS7"/>
<dbReference type="UniPathway" id="UPA00331">
    <property type="reaction ID" value="UER00451"/>
</dbReference>
<dbReference type="Proteomes" id="UP000000536">
    <property type="component" value="Chromosome"/>
</dbReference>
<dbReference type="GO" id="GO:0005829">
    <property type="term" value="C:cytosol"/>
    <property type="evidence" value="ECO:0000318"/>
    <property type="project" value="GO_Central"/>
</dbReference>
<dbReference type="GO" id="GO:0004014">
    <property type="term" value="F:adenosylmethionine decarboxylase activity"/>
    <property type="evidence" value="ECO:0000318"/>
    <property type="project" value="GO_Central"/>
</dbReference>
<dbReference type="GO" id="GO:0008295">
    <property type="term" value="P:spermidine biosynthetic process"/>
    <property type="evidence" value="ECO:0000318"/>
    <property type="project" value="GO_Central"/>
</dbReference>
<dbReference type="FunFam" id="3.30.360.110:FF:000001">
    <property type="entry name" value="S-adenosylmethionine decarboxylase proenzyme"/>
    <property type="match status" value="1"/>
</dbReference>
<dbReference type="Gene3D" id="3.30.160.750">
    <property type="match status" value="1"/>
</dbReference>
<dbReference type="Gene3D" id="3.30.360.110">
    <property type="entry name" value="S-adenosylmethionine decarboxylase domain"/>
    <property type="match status" value="1"/>
</dbReference>
<dbReference type="HAMAP" id="MF_00464">
    <property type="entry name" value="AdoMetDC_1"/>
    <property type="match status" value="1"/>
</dbReference>
<dbReference type="InterPro" id="IPR042286">
    <property type="entry name" value="AdoMetDC_C"/>
</dbReference>
<dbReference type="InterPro" id="IPR003826">
    <property type="entry name" value="AdoMetDC_fam_prok"/>
</dbReference>
<dbReference type="InterPro" id="IPR042284">
    <property type="entry name" value="AdoMetDC_N"/>
</dbReference>
<dbReference type="InterPro" id="IPR016067">
    <property type="entry name" value="S-AdoMet_deCO2ase_core"/>
</dbReference>
<dbReference type="InterPro" id="IPR017716">
    <property type="entry name" value="S-AdoMet_deCOase_pro-enz"/>
</dbReference>
<dbReference type="NCBIfam" id="TIGR03330">
    <property type="entry name" value="SAM_DCase_Bsu"/>
    <property type="match status" value="1"/>
</dbReference>
<dbReference type="PANTHER" id="PTHR33866">
    <property type="entry name" value="S-ADENOSYLMETHIONINE DECARBOXYLASE PROENZYME"/>
    <property type="match status" value="1"/>
</dbReference>
<dbReference type="PANTHER" id="PTHR33866:SF2">
    <property type="entry name" value="S-ADENOSYLMETHIONINE DECARBOXYLASE PROENZYME"/>
    <property type="match status" value="1"/>
</dbReference>
<dbReference type="Pfam" id="PF02675">
    <property type="entry name" value="AdoMet_dc"/>
    <property type="match status" value="1"/>
</dbReference>
<dbReference type="SUPFAM" id="SSF56276">
    <property type="entry name" value="S-adenosylmethionine decarboxylase"/>
    <property type="match status" value="1"/>
</dbReference>